<organism>
    <name type="scientific">Leptospira borgpetersenii serovar Hardjo-bovis (strain JB197)</name>
    <dbReference type="NCBI Taxonomy" id="355277"/>
    <lineage>
        <taxon>Bacteria</taxon>
        <taxon>Pseudomonadati</taxon>
        <taxon>Spirochaetota</taxon>
        <taxon>Spirochaetia</taxon>
        <taxon>Leptospirales</taxon>
        <taxon>Leptospiraceae</taxon>
        <taxon>Leptospira</taxon>
    </lineage>
</organism>
<feature type="chain" id="PRO_1000060944" description="dTTP/UTP pyrophosphatase">
    <location>
        <begin position="1"/>
        <end position="185"/>
    </location>
</feature>
<feature type="active site" description="Proton acceptor" evidence="1">
    <location>
        <position position="64"/>
    </location>
</feature>
<feature type="site" description="Important for substrate specificity" evidence="1">
    <location>
        <position position="10"/>
    </location>
</feature>
<feature type="site" description="Important for substrate specificity" evidence="1">
    <location>
        <position position="65"/>
    </location>
</feature>
<feature type="site" description="Important for substrate specificity" evidence="1">
    <location>
        <position position="147"/>
    </location>
</feature>
<sequence>MIVLRSRSPRRKYVLESLDLDFRIEPEDIDESSLKNEHPLEYLKRICLSKLGTRSKDEFLISCDTIVVQENSILQKPKNFLEAVEMLERLSGKTHKVASGLGIYYKGLERFAFEFSQVHFRSWNHKQIREYVEKYSPFDKAGSYGVQDKEGPVRSFDGSYTNILGFPIRTFFQYHEFWKKYLKGN</sequence>
<gene>
    <name type="ordered locus">LBJ_3012</name>
</gene>
<evidence type="ECO:0000255" key="1">
    <source>
        <dbReference type="HAMAP-Rule" id="MF_00528"/>
    </source>
</evidence>
<keyword id="KW-0963">Cytoplasm</keyword>
<keyword id="KW-0378">Hydrolase</keyword>
<keyword id="KW-0546">Nucleotide metabolism</keyword>
<accession>Q04NX0</accession>
<dbReference type="EC" id="3.6.1.9" evidence="1"/>
<dbReference type="EMBL" id="CP000350">
    <property type="protein sequence ID" value="ABJ77400.1"/>
    <property type="molecule type" value="Genomic_DNA"/>
</dbReference>
<dbReference type="RefSeq" id="WP_011671191.1">
    <property type="nucleotide sequence ID" value="NC_008510.1"/>
</dbReference>
<dbReference type="SMR" id="Q04NX0"/>
<dbReference type="KEGG" id="lbj:LBJ_3012"/>
<dbReference type="PATRIC" id="fig|355276.3.peg.3847"/>
<dbReference type="HOGENOM" id="CLU_040416_0_0_12"/>
<dbReference type="Proteomes" id="UP000000656">
    <property type="component" value="Chromosome 1"/>
</dbReference>
<dbReference type="GO" id="GO:0005737">
    <property type="term" value="C:cytoplasm"/>
    <property type="evidence" value="ECO:0007669"/>
    <property type="project" value="UniProtKB-SubCell"/>
</dbReference>
<dbReference type="GO" id="GO:0036218">
    <property type="term" value="F:dTTP diphosphatase activity"/>
    <property type="evidence" value="ECO:0007669"/>
    <property type="project" value="RHEA"/>
</dbReference>
<dbReference type="GO" id="GO:0036221">
    <property type="term" value="F:UTP diphosphatase activity"/>
    <property type="evidence" value="ECO:0007669"/>
    <property type="project" value="RHEA"/>
</dbReference>
<dbReference type="GO" id="GO:0009117">
    <property type="term" value="P:nucleotide metabolic process"/>
    <property type="evidence" value="ECO:0007669"/>
    <property type="project" value="UniProtKB-KW"/>
</dbReference>
<dbReference type="CDD" id="cd00555">
    <property type="entry name" value="Maf"/>
    <property type="match status" value="1"/>
</dbReference>
<dbReference type="Gene3D" id="3.90.950.10">
    <property type="match status" value="1"/>
</dbReference>
<dbReference type="HAMAP" id="MF_00528">
    <property type="entry name" value="Maf"/>
    <property type="match status" value="1"/>
</dbReference>
<dbReference type="InterPro" id="IPR029001">
    <property type="entry name" value="ITPase-like_fam"/>
</dbReference>
<dbReference type="InterPro" id="IPR003697">
    <property type="entry name" value="Maf-like"/>
</dbReference>
<dbReference type="NCBIfam" id="TIGR00172">
    <property type="entry name" value="maf"/>
    <property type="match status" value="1"/>
</dbReference>
<dbReference type="PANTHER" id="PTHR43213">
    <property type="entry name" value="BIFUNCTIONAL DTTP/UTP PYROPHOSPHATASE/METHYLTRANSFERASE PROTEIN-RELATED"/>
    <property type="match status" value="1"/>
</dbReference>
<dbReference type="PANTHER" id="PTHR43213:SF5">
    <property type="entry name" value="BIFUNCTIONAL DTTP_UTP PYROPHOSPHATASE_METHYLTRANSFERASE PROTEIN-RELATED"/>
    <property type="match status" value="1"/>
</dbReference>
<dbReference type="Pfam" id="PF02545">
    <property type="entry name" value="Maf"/>
    <property type="match status" value="1"/>
</dbReference>
<dbReference type="PIRSF" id="PIRSF006305">
    <property type="entry name" value="Maf"/>
    <property type="match status" value="1"/>
</dbReference>
<dbReference type="SUPFAM" id="SSF52972">
    <property type="entry name" value="ITPase-like"/>
    <property type="match status" value="1"/>
</dbReference>
<comment type="function">
    <text evidence="1">Nucleoside triphosphate pyrophosphatase that hydrolyzes dTTP and UTP. May have a dual role in cell division arrest and in preventing the incorporation of modified nucleotides into cellular nucleic acids.</text>
</comment>
<comment type="catalytic activity">
    <reaction evidence="1">
        <text>dTTP + H2O = dTMP + diphosphate + H(+)</text>
        <dbReference type="Rhea" id="RHEA:28534"/>
        <dbReference type="ChEBI" id="CHEBI:15377"/>
        <dbReference type="ChEBI" id="CHEBI:15378"/>
        <dbReference type="ChEBI" id="CHEBI:33019"/>
        <dbReference type="ChEBI" id="CHEBI:37568"/>
        <dbReference type="ChEBI" id="CHEBI:63528"/>
        <dbReference type="EC" id="3.6.1.9"/>
    </reaction>
</comment>
<comment type="catalytic activity">
    <reaction evidence="1">
        <text>UTP + H2O = UMP + diphosphate + H(+)</text>
        <dbReference type="Rhea" id="RHEA:29395"/>
        <dbReference type="ChEBI" id="CHEBI:15377"/>
        <dbReference type="ChEBI" id="CHEBI:15378"/>
        <dbReference type="ChEBI" id="CHEBI:33019"/>
        <dbReference type="ChEBI" id="CHEBI:46398"/>
        <dbReference type="ChEBI" id="CHEBI:57865"/>
        <dbReference type="EC" id="3.6.1.9"/>
    </reaction>
</comment>
<comment type="cofactor">
    <cofactor evidence="1">
        <name>a divalent metal cation</name>
        <dbReference type="ChEBI" id="CHEBI:60240"/>
    </cofactor>
</comment>
<comment type="subcellular location">
    <subcellularLocation>
        <location evidence="1">Cytoplasm</location>
    </subcellularLocation>
</comment>
<comment type="similarity">
    <text evidence="1">Belongs to the Maf family. YhdE subfamily.</text>
</comment>
<reference key="1">
    <citation type="journal article" date="2006" name="Proc. Natl. Acad. Sci. U.S.A.">
        <title>Genome reduction in Leptospira borgpetersenii reflects limited transmission potential.</title>
        <authorList>
            <person name="Bulach D.M."/>
            <person name="Zuerner R.L."/>
            <person name="Wilson P."/>
            <person name="Seemann T."/>
            <person name="McGrath A."/>
            <person name="Cullen P.A."/>
            <person name="Davis J."/>
            <person name="Johnson M."/>
            <person name="Kuczek E."/>
            <person name="Alt D.P."/>
            <person name="Peterson-Burch B."/>
            <person name="Coppel R.L."/>
            <person name="Rood J.I."/>
            <person name="Davies J.K."/>
            <person name="Adler B."/>
        </authorList>
    </citation>
    <scope>NUCLEOTIDE SEQUENCE [LARGE SCALE GENOMIC DNA]</scope>
    <source>
        <strain>JB197</strain>
    </source>
</reference>
<proteinExistence type="inferred from homology"/>
<name>NTPPA_LEPBJ</name>
<protein>
    <recommendedName>
        <fullName evidence="1">dTTP/UTP pyrophosphatase</fullName>
        <shortName evidence="1">dTTPase/UTPase</shortName>
        <ecNumber evidence="1">3.6.1.9</ecNumber>
    </recommendedName>
    <alternativeName>
        <fullName evidence="1">Nucleoside triphosphate pyrophosphatase</fullName>
    </alternativeName>
    <alternativeName>
        <fullName evidence="1">Nucleotide pyrophosphatase</fullName>
        <shortName evidence="1">Nucleotide PPase</shortName>
    </alternativeName>
</protein>